<comment type="function">
    <text>May be involved in the secretion of the autolysin blyA.</text>
</comment>
<reference key="1">
    <citation type="journal article" date="1999" name="Microbiology">
        <title>Nucleotide sequence of the Bacillus subtilis temperate bacteriophage SPbetac2.</title>
        <authorList>
            <person name="Lazarevic V."/>
            <person name="Duesterhoeft A."/>
            <person name="Soldo B."/>
            <person name="Hilbert H."/>
            <person name="Mauel C."/>
            <person name="Karamata D."/>
        </authorList>
    </citation>
    <scope>NUCLEOTIDE SEQUENCE [LARGE SCALE GENOMIC DNA]</scope>
</reference>
<gene>
    <name type="primary">bhlA</name>
    <name type="ordered locus">SPBc2p026</name>
</gene>
<organismHost>
    <name type="scientific">Bacillus pumilus</name>
    <name type="common">Bacillus mesentericus</name>
    <dbReference type="NCBI Taxonomy" id="1408"/>
</organismHost>
<organismHost>
    <name type="scientific">Bacillus subtilis</name>
    <dbReference type="NCBI Taxonomy" id="1423"/>
</organismHost>
<sequence length="70" mass="8380">MEMDITQYLSTQGPFAVLFCWLLFYVMKTSKERESKLYNQIDSQNEVLGKFSEKYDVVIEKLDKIEQNFK</sequence>
<dbReference type="EMBL" id="AF020713">
    <property type="protein sequence ID" value="AAC12998.1"/>
    <property type="molecule type" value="Genomic_DNA"/>
</dbReference>
<dbReference type="PIR" id="T12789">
    <property type="entry name" value="T12789"/>
</dbReference>
<dbReference type="SMR" id="O64039"/>
<dbReference type="KEGG" id="vg:1261436"/>
<dbReference type="Proteomes" id="UP000009091">
    <property type="component" value="Genome"/>
</dbReference>
<dbReference type="InterPro" id="IPR024405">
    <property type="entry name" value="Phage_BhlA/UviB"/>
</dbReference>
<dbReference type="Pfam" id="PF10960">
    <property type="entry name" value="Holin_BhlA"/>
    <property type="match status" value="1"/>
</dbReference>
<feature type="chain" id="PRO_0000064922" description="Protein bhlA">
    <location>
        <begin position="1"/>
        <end position="70"/>
    </location>
</feature>
<accession>O64039</accession>
<organism>
    <name type="scientific">Bacillus phage SPbeta</name>
    <name type="common">Bacillus phage SPBc2</name>
    <name type="synonym">Bacteriophage SP-beta</name>
    <dbReference type="NCBI Taxonomy" id="2932878"/>
    <lineage>
        <taxon>Viruses</taxon>
        <taxon>Duplodnaviria</taxon>
        <taxon>Heunggongvirae</taxon>
        <taxon>Uroviricota</taxon>
        <taxon>Caudoviricetes</taxon>
        <taxon>Spbetavirus</taxon>
        <taxon>Spbetavirus SPbeta</taxon>
    </lineage>
</organism>
<keyword id="KW-1185">Reference proteome</keyword>
<name>BHLA_BPSPB</name>
<proteinExistence type="predicted"/>
<protein>
    <recommendedName>
        <fullName>Protein bhlA</fullName>
    </recommendedName>
</protein>